<name>RSA3_KLULA</name>
<sequence>MSEGHIAAISKTNKRKNRRKKRRTQDVSDSSSDSSSDSENSSVEDNDTKLETVEKAASDVEDVTLSDIDMDKEEDEAALDDKKASRKEGSVLSSETVDKLNKVGLTTSDLTGNNGIHLGNIDLNKMSATLDESSNKLLENNKDKNGLKNQYLSMLFESYGDDMNELRNAPDFTSKTLVMLANVLKDGGDMFDLETLKTIVEDK</sequence>
<reference key="1">
    <citation type="journal article" date="2004" name="Nature">
        <title>Genome evolution in yeasts.</title>
        <authorList>
            <person name="Dujon B."/>
            <person name="Sherman D."/>
            <person name="Fischer G."/>
            <person name="Durrens P."/>
            <person name="Casaregola S."/>
            <person name="Lafontaine I."/>
            <person name="de Montigny J."/>
            <person name="Marck C."/>
            <person name="Neuveglise C."/>
            <person name="Talla E."/>
            <person name="Goffard N."/>
            <person name="Frangeul L."/>
            <person name="Aigle M."/>
            <person name="Anthouard V."/>
            <person name="Babour A."/>
            <person name="Barbe V."/>
            <person name="Barnay S."/>
            <person name="Blanchin S."/>
            <person name="Beckerich J.-M."/>
            <person name="Beyne E."/>
            <person name="Bleykasten C."/>
            <person name="Boisrame A."/>
            <person name="Boyer J."/>
            <person name="Cattolico L."/>
            <person name="Confanioleri F."/>
            <person name="de Daruvar A."/>
            <person name="Despons L."/>
            <person name="Fabre E."/>
            <person name="Fairhead C."/>
            <person name="Ferry-Dumazet H."/>
            <person name="Groppi A."/>
            <person name="Hantraye F."/>
            <person name="Hennequin C."/>
            <person name="Jauniaux N."/>
            <person name="Joyet P."/>
            <person name="Kachouri R."/>
            <person name="Kerrest A."/>
            <person name="Koszul R."/>
            <person name="Lemaire M."/>
            <person name="Lesur I."/>
            <person name="Ma L."/>
            <person name="Muller H."/>
            <person name="Nicaud J.-M."/>
            <person name="Nikolski M."/>
            <person name="Oztas S."/>
            <person name="Ozier-Kalogeropoulos O."/>
            <person name="Pellenz S."/>
            <person name="Potier S."/>
            <person name="Richard G.-F."/>
            <person name="Straub M.-L."/>
            <person name="Suleau A."/>
            <person name="Swennen D."/>
            <person name="Tekaia F."/>
            <person name="Wesolowski-Louvel M."/>
            <person name="Westhof E."/>
            <person name="Wirth B."/>
            <person name="Zeniou-Meyer M."/>
            <person name="Zivanovic Y."/>
            <person name="Bolotin-Fukuhara M."/>
            <person name="Thierry A."/>
            <person name="Bouchier C."/>
            <person name="Caudron B."/>
            <person name="Scarpelli C."/>
            <person name="Gaillardin C."/>
            <person name="Weissenbach J."/>
            <person name="Wincker P."/>
            <person name="Souciet J.-L."/>
        </authorList>
    </citation>
    <scope>NUCLEOTIDE SEQUENCE [LARGE SCALE GENOMIC DNA]</scope>
    <source>
        <strain>ATCC 8585 / CBS 2359 / DSM 70799 / NBRC 1267 / NRRL Y-1140 / WM37</strain>
    </source>
</reference>
<evidence type="ECO:0000250" key="1"/>
<evidence type="ECO:0000256" key="2">
    <source>
        <dbReference type="SAM" id="MobiDB-lite"/>
    </source>
</evidence>
<evidence type="ECO:0000305" key="3"/>
<organism>
    <name type="scientific">Kluyveromyces lactis (strain ATCC 8585 / CBS 2359 / DSM 70799 / NBRC 1267 / NRRL Y-1140 / WM37)</name>
    <name type="common">Yeast</name>
    <name type="synonym">Candida sphaerica</name>
    <dbReference type="NCBI Taxonomy" id="284590"/>
    <lineage>
        <taxon>Eukaryota</taxon>
        <taxon>Fungi</taxon>
        <taxon>Dikarya</taxon>
        <taxon>Ascomycota</taxon>
        <taxon>Saccharomycotina</taxon>
        <taxon>Saccharomycetes</taxon>
        <taxon>Saccharomycetales</taxon>
        <taxon>Saccharomycetaceae</taxon>
        <taxon>Kluyveromyces</taxon>
    </lineage>
</organism>
<gene>
    <name type="primary">RSA3</name>
    <name type="ordered locus">KLLA0F13266g</name>
</gene>
<dbReference type="EMBL" id="CR382126">
    <property type="protein sequence ID" value="CAG98385.1"/>
    <property type="molecule type" value="Genomic_DNA"/>
</dbReference>
<dbReference type="RefSeq" id="XP_455677.1">
    <property type="nucleotide sequence ID" value="XM_455677.1"/>
</dbReference>
<dbReference type="FunCoup" id="Q6CK62">
    <property type="interactions" value="297"/>
</dbReference>
<dbReference type="STRING" id="284590.Q6CK62"/>
<dbReference type="PaxDb" id="284590-Q6CK62"/>
<dbReference type="KEGG" id="kla:KLLA0_F13266g"/>
<dbReference type="eggNOG" id="ENOG502S5DP">
    <property type="taxonomic scope" value="Eukaryota"/>
</dbReference>
<dbReference type="HOGENOM" id="CLU_119118_0_0_1"/>
<dbReference type="InParanoid" id="Q6CK62"/>
<dbReference type="OMA" id="DAHNNNK"/>
<dbReference type="Proteomes" id="UP000000598">
    <property type="component" value="Chromosome F"/>
</dbReference>
<dbReference type="GO" id="GO:0005730">
    <property type="term" value="C:nucleolus"/>
    <property type="evidence" value="ECO:0007669"/>
    <property type="project" value="UniProtKB-SubCell"/>
</dbReference>
<dbReference type="GO" id="GO:0030687">
    <property type="term" value="C:preribosome, large subunit precursor"/>
    <property type="evidence" value="ECO:0007669"/>
    <property type="project" value="TreeGrafter"/>
</dbReference>
<dbReference type="GO" id="GO:0000027">
    <property type="term" value="P:ribosomal large subunit assembly"/>
    <property type="evidence" value="ECO:0007669"/>
    <property type="project" value="TreeGrafter"/>
</dbReference>
<dbReference type="InterPro" id="IPR051898">
    <property type="entry name" value="Ribosome_Assembly_3"/>
</dbReference>
<dbReference type="InterPro" id="IPR028217">
    <property type="entry name" value="Rsa3_C"/>
</dbReference>
<dbReference type="PANTHER" id="PTHR28127">
    <property type="entry name" value="RIBOSOME ASSEMBLY PROTEIN 3"/>
    <property type="match status" value="1"/>
</dbReference>
<dbReference type="PANTHER" id="PTHR28127:SF1">
    <property type="entry name" value="RIBOSOME ASSEMBLY PROTEIN 3"/>
    <property type="match status" value="1"/>
</dbReference>
<dbReference type="Pfam" id="PF14615">
    <property type="entry name" value="Rsa3"/>
    <property type="match status" value="1"/>
</dbReference>
<keyword id="KW-0539">Nucleus</keyword>
<keyword id="KW-1185">Reference proteome</keyword>
<keyword id="KW-0687">Ribonucleoprotein</keyword>
<keyword id="KW-0690">Ribosome biogenesis</keyword>
<feature type="chain" id="PRO_0000097465" description="Ribosome assembly protein 3">
    <location>
        <begin position="1"/>
        <end position="203"/>
    </location>
</feature>
<feature type="region of interest" description="Disordered" evidence="2">
    <location>
        <begin position="1"/>
        <end position="90"/>
    </location>
</feature>
<feature type="compositionally biased region" description="Basic residues" evidence="2">
    <location>
        <begin position="12"/>
        <end position="23"/>
    </location>
</feature>
<feature type="compositionally biased region" description="Low complexity" evidence="2">
    <location>
        <begin position="27"/>
        <end position="43"/>
    </location>
</feature>
<feature type="compositionally biased region" description="Basic and acidic residues" evidence="2">
    <location>
        <begin position="46"/>
        <end position="58"/>
    </location>
</feature>
<feature type="compositionally biased region" description="Acidic residues" evidence="2">
    <location>
        <begin position="59"/>
        <end position="78"/>
    </location>
</feature>
<feature type="compositionally biased region" description="Basic and acidic residues" evidence="2">
    <location>
        <begin position="79"/>
        <end position="89"/>
    </location>
</feature>
<accession>Q6CK62</accession>
<comment type="function">
    <text evidence="1">Required for efficient biogenesis of the 60S ribosomal subunit.</text>
</comment>
<comment type="subunit">
    <text evidence="1">Associates with nucleolar pre-ribosomal particles.</text>
</comment>
<comment type="subcellular location">
    <subcellularLocation>
        <location evidence="1">Nucleus</location>
        <location evidence="1">Nucleolus</location>
    </subcellularLocation>
</comment>
<comment type="similarity">
    <text evidence="3">Belongs to the RSA3 family.</text>
</comment>
<protein>
    <recommendedName>
        <fullName>Ribosome assembly protein 3</fullName>
    </recommendedName>
</protein>
<proteinExistence type="inferred from homology"/>